<sequence>MILIKKFIVAIELFIFNRNNCRYILLCTDNKVKNIQTSLSICILCAISYALIKKIQQTFQLSSKFAASCS</sequence>
<geneLocation type="chloroplast"/>
<comment type="subcellular location">
    <subcellularLocation>
        <location>Plastid</location>
        <location>Chloroplast</location>
    </subcellularLocation>
</comment>
<dbReference type="EMBL" id="AF166114">
    <property type="protein sequence ID" value="AAF43892.1"/>
    <property type="molecule type" value="Genomic_DNA"/>
</dbReference>
<dbReference type="RefSeq" id="NP_038433.1">
    <property type="nucleotide sequence ID" value="NC_002186.1"/>
</dbReference>
<dbReference type="GeneID" id="1403689"/>
<dbReference type="GO" id="GO:0009507">
    <property type="term" value="C:chloroplast"/>
    <property type="evidence" value="ECO:0007669"/>
    <property type="project" value="UniProtKB-SubCell"/>
</dbReference>
<organism>
    <name type="scientific">Mesostigma viride</name>
    <name type="common">Green alga</name>
    <dbReference type="NCBI Taxonomy" id="41882"/>
    <lineage>
        <taxon>Eukaryota</taxon>
        <taxon>Viridiplantae</taxon>
        <taxon>Streptophyta</taxon>
        <taxon>Mesostigmatophyceae</taxon>
        <taxon>Mesostigmatales</taxon>
        <taxon>Mesostigmataceae</taxon>
        <taxon>Mesostigma</taxon>
    </lineage>
</organism>
<keyword id="KW-0150">Chloroplast</keyword>
<keyword id="KW-0934">Plastid</keyword>
<protein>
    <recommendedName>
        <fullName>Uncharacterized 8.0 kDa protein in ndhF-psbD intergenic region</fullName>
    </recommendedName>
</protein>
<accession>Q9MUM7</accession>
<reference key="1">
    <citation type="journal article" date="2000" name="Nature">
        <title>Ancestral chloroplast genome in Mesostigma viride reveals an early branch of green plant evolution.</title>
        <authorList>
            <person name="Lemieux C."/>
            <person name="Otis C."/>
            <person name="Turmel M."/>
        </authorList>
    </citation>
    <scope>NUCLEOTIDE SEQUENCE [LARGE SCALE GENOMIC DNA]</scope>
    <source>
        <strain>NIES-296 / KY-14 / CCMP 2046</strain>
    </source>
</reference>
<proteinExistence type="predicted"/>
<feature type="chain" id="PRO_0000217451" description="Uncharacterized 8.0 kDa protein in ndhF-psbD intergenic region">
    <location>
        <begin position="1"/>
        <end position="70"/>
    </location>
</feature>
<name>YCX5_MESVI</name>